<name>PURT_CHLTE</name>
<organism>
    <name type="scientific">Chlorobaculum tepidum (strain ATCC 49652 / DSM 12025 / NBRC 103806 / TLS)</name>
    <name type="common">Chlorobium tepidum</name>
    <dbReference type="NCBI Taxonomy" id="194439"/>
    <lineage>
        <taxon>Bacteria</taxon>
        <taxon>Pseudomonadati</taxon>
        <taxon>Chlorobiota</taxon>
        <taxon>Chlorobiia</taxon>
        <taxon>Chlorobiales</taxon>
        <taxon>Chlorobiaceae</taxon>
        <taxon>Chlorobaculum</taxon>
    </lineage>
</organism>
<evidence type="ECO:0000255" key="1">
    <source>
        <dbReference type="HAMAP-Rule" id="MF_01643"/>
    </source>
</evidence>
<feature type="chain" id="PRO_0000319150" description="Formate-dependent phosphoribosylglycinamide formyltransferase">
    <location>
        <begin position="1"/>
        <end position="392"/>
    </location>
</feature>
<feature type="domain" description="ATP-grasp" evidence="1">
    <location>
        <begin position="109"/>
        <end position="300"/>
    </location>
</feature>
<feature type="binding site" evidence="1">
    <location>
        <begin position="12"/>
        <end position="13"/>
    </location>
    <ligand>
        <name>N(1)-(5-phospho-beta-D-ribosyl)glycinamide</name>
        <dbReference type="ChEBI" id="CHEBI:143788"/>
    </ligand>
</feature>
<feature type="binding site" evidence="1">
    <location>
        <position position="72"/>
    </location>
    <ligand>
        <name>N(1)-(5-phospho-beta-D-ribosyl)glycinamide</name>
        <dbReference type="ChEBI" id="CHEBI:143788"/>
    </ligand>
</feature>
<feature type="binding site" evidence="1">
    <location>
        <position position="104"/>
    </location>
    <ligand>
        <name>ATP</name>
        <dbReference type="ChEBI" id="CHEBI:30616"/>
    </ligand>
</feature>
<feature type="binding site" evidence="1">
    <location>
        <position position="145"/>
    </location>
    <ligand>
        <name>ATP</name>
        <dbReference type="ChEBI" id="CHEBI:30616"/>
    </ligand>
</feature>
<feature type="binding site" evidence="1">
    <location>
        <begin position="150"/>
        <end position="155"/>
    </location>
    <ligand>
        <name>ATP</name>
        <dbReference type="ChEBI" id="CHEBI:30616"/>
    </ligand>
</feature>
<feature type="binding site" evidence="1">
    <location>
        <begin position="185"/>
        <end position="188"/>
    </location>
    <ligand>
        <name>ATP</name>
        <dbReference type="ChEBI" id="CHEBI:30616"/>
    </ligand>
</feature>
<feature type="binding site" evidence="1">
    <location>
        <position position="193"/>
    </location>
    <ligand>
        <name>ATP</name>
        <dbReference type="ChEBI" id="CHEBI:30616"/>
    </ligand>
</feature>
<feature type="binding site" evidence="1">
    <location>
        <position position="258"/>
    </location>
    <ligand>
        <name>Mg(2+)</name>
        <dbReference type="ChEBI" id="CHEBI:18420"/>
    </ligand>
</feature>
<feature type="binding site" evidence="1">
    <location>
        <position position="270"/>
    </location>
    <ligand>
        <name>Mg(2+)</name>
        <dbReference type="ChEBI" id="CHEBI:18420"/>
    </ligand>
</feature>
<feature type="binding site" evidence="1">
    <location>
        <position position="277"/>
    </location>
    <ligand>
        <name>N(1)-(5-phospho-beta-D-ribosyl)glycinamide</name>
        <dbReference type="ChEBI" id="CHEBI:143788"/>
    </ligand>
</feature>
<feature type="binding site" evidence="1">
    <location>
        <position position="348"/>
    </location>
    <ligand>
        <name>N(1)-(5-phospho-beta-D-ribosyl)glycinamide</name>
        <dbReference type="ChEBI" id="CHEBI:143788"/>
    </ligand>
</feature>
<feature type="binding site" evidence="1">
    <location>
        <begin position="355"/>
        <end position="356"/>
    </location>
    <ligand>
        <name>N(1)-(5-phospho-beta-D-ribosyl)glycinamide</name>
        <dbReference type="ChEBI" id="CHEBI:143788"/>
    </ligand>
</feature>
<keyword id="KW-0067">ATP-binding</keyword>
<keyword id="KW-0436">Ligase</keyword>
<keyword id="KW-0460">Magnesium</keyword>
<keyword id="KW-0479">Metal-binding</keyword>
<keyword id="KW-0547">Nucleotide-binding</keyword>
<keyword id="KW-0658">Purine biosynthesis</keyword>
<keyword id="KW-1185">Reference proteome</keyword>
<protein>
    <recommendedName>
        <fullName evidence="1">Formate-dependent phosphoribosylglycinamide formyltransferase</fullName>
        <ecNumber evidence="1">6.3.1.21</ecNumber>
    </recommendedName>
    <alternativeName>
        <fullName evidence="1">5'-phosphoribosylglycinamide transformylase 2</fullName>
    </alternativeName>
    <alternativeName>
        <fullName evidence="1">Formate-dependent GAR transformylase</fullName>
    </alternativeName>
    <alternativeName>
        <fullName evidence="1">GAR transformylase 2</fullName>
        <shortName evidence="1">GART 2</shortName>
    </alternativeName>
    <alternativeName>
        <fullName evidence="1">Non-folate glycinamide ribonucleotide transformylase</fullName>
    </alternativeName>
    <alternativeName>
        <fullName evidence="1">Phosphoribosylglycinamide formyltransferase 2</fullName>
    </alternativeName>
</protein>
<comment type="function">
    <text evidence="1">Involved in the de novo purine biosynthesis. Catalyzes the transfer of formate to 5-phospho-ribosyl-glycinamide (GAR), producing 5-phospho-ribosyl-N-formylglycinamide (FGAR). Formate is provided by PurU via hydrolysis of 10-formyl-tetrahydrofolate.</text>
</comment>
<comment type="catalytic activity">
    <reaction evidence="1">
        <text>N(1)-(5-phospho-beta-D-ribosyl)glycinamide + formate + ATP = N(2)-formyl-N(1)-(5-phospho-beta-D-ribosyl)glycinamide + ADP + phosphate + H(+)</text>
        <dbReference type="Rhea" id="RHEA:24829"/>
        <dbReference type="ChEBI" id="CHEBI:15378"/>
        <dbReference type="ChEBI" id="CHEBI:15740"/>
        <dbReference type="ChEBI" id="CHEBI:30616"/>
        <dbReference type="ChEBI" id="CHEBI:43474"/>
        <dbReference type="ChEBI" id="CHEBI:143788"/>
        <dbReference type="ChEBI" id="CHEBI:147286"/>
        <dbReference type="ChEBI" id="CHEBI:456216"/>
        <dbReference type="EC" id="6.3.1.21"/>
    </reaction>
    <physiologicalReaction direction="left-to-right" evidence="1">
        <dbReference type="Rhea" id="RHEA:24830"/>
    </physiologicalReaction>
</comment>
<comment type="pathway">
    <text evidence="1">Purine metabolism; IMP biosynthesis via de novo pathway; N(2)-formyl-N(1)-(5-phospho-D-ribosyl)glycinamide from N(1)-(5-phospho-D-ribosyl)glycinamide (formate route): step 1/1.</text>
</comment>
<comment type="subunit">
    <text evidence="1">Homodimer.</text>
</comment>
<comment type="similarity">
    <text evidence="1">Belongs to the PurK/PurT family.</text>
</comment>
<accession>Q8KDJ0</accession>
<sequence>MPKTIMLLGSGELGKEFVIAVKRLGQRVVAVDSYDDAPAQQVADRREVIDMLDGRALDAIVAKHRPDIIVPEIEAIRTERFYDYEKQGIQVVPSARAANFTMNRKAIRDLAARDLGLRTANYRYASSLEELRSAVGEVGLPCVVKPLMSSSGKGQSTVRSEAEIEAAWSYSQSGKRGDIAEVIVEAFVPFHTEITLLTVTQKNGPTLFCPPIGHRQERGDYQESWQPCRISPEQLEEAQNIAGKVTEALTGAGIWGVEFFLADDGVYFSELSPRPHDTGMVTLAGTQNLSEFELHARAVLGLPVPDITLLRAGASAVILADRVGNNPSFDGLDAALAEPGSDIRIFGKPVMRPYRRMGVALMSGEKGSDVDELKRQAIANAEKVMIKCDETV</sequence>
<proteinExistence type="inferred from homology"/>
<gene>
    <name evidence="1" type="primary">purT</name>
    <name type="ordered locus">CT1060</name>
</gene>
<dbReference type="EC" id="6.3.1.21" evidence="1"/>
<dbReference type="EMBL" id="AE006470">
    <property type="protein sequence ID" value="AAM72293.1"/>
    <property type="molecule type" value="Genomic_DNA"/>
</dbReference>
<dbReference type="RefSeq" id="NP_661951.1">
    <property type="nucleotide sequence ID" value="NC_002932.3"/>
</dbReference>
<dbReference type="RefSeq" id="WP_010932738.1">
    <property type="nucleotide sequence ID" value="NC_002932.3"/>
</dbReference>
<dbReference type="SMR" id="Q8KDJ0"/>
<dbReference type="STRING" id="194439.CT1060"/>
<dbReference type="EnsemblBacteria" id="AAM72293">
    <property type="protein sequence ID" value="AAM72293"/>
    <property type="gene ID" value="CT1060"/>
</dbReference>
<dbReference type="KEGG" id="cte:CT1060"/>
<dbReference type="PATRIC" id="fig|194439.7.peg.965"/>
<dbReference type="eggNOG" id="COG0027">
    <property type="taxonomic scope" value="Bacteria"/>
</dbReference>
<dbReference type="HOGENOM" id="CLU_011534_1_3_10"/>
<dbReference type="OrthoDB" id="9804625at2"/>
<dbReference type="UniPathway" id="UPA00074">
    <property type="reaction ID" value="UER00127"/>
</dbReference>
<dbReference type="Proteomes" id="UP000001007">
    <property type="component" value="Chromosome"/>
</dbReference>
<dbReference type="GO" id="GO:0005829">
    <property type="term" value="C:cytosol"/>
    <property type="evidence" value="ECO:0007669"/>
    <property type="project" value="TreeGrafter"/>
</dbReference>
<dbReference type="GO" id="GO:0005524">
    <property type="term" value="F:ATP binding"/>
    <property type="evidence" value="ECO:0007669"/>
    <property type="project" value="UniProtKB-UniRule"/>
</dbReference>
<dbReference type="GO" id="GO:0000287">
    <property type="term" value="F:magnesium ion binding"/>
    <property type="evidence" value="ECO:0007669"/>
    <property type="project" value="InterPro"/>
</dbReference>
<dbReference type="GO" id="GO:0043815">
    <property type="term" value="F:phosphoribosylglycinamide formyltransferase 2 activity"/>
    <property type="evidence" value="ECO:0007669"/>
    <property type="project" value="UniProtKB-UniRule"/>
</dbReference>
<dbReference type="GO" id="GO:0004644">
    <property type="term" value="F:phosphoribosylglycinamide formyltransferase activity"/>
    <property type="evidence" value="ECO:0007669"/>
    <property type="project" value="InterPro"/>
</dbReference>
<dbReference type="GO" id="GO:0006189">
    <property type="term" value="P:'de novo' IMP biosynthetic process"/>
    <property type="evidence" value="ECO:0007669"/>
    <property type="project" value="UniProtKB-UniRule"/>
</dbReference>
<dbReference type="FunFam" id="3.30.1490.20:FF:000013">
    <property type="entry name" value="Formate-dependent phosphoribosylglycinamide formyltransferase"/>
    <property type="match status" value="1"/>
</dbReference>
<dbReference type="FunFam" id="3.30.470.20:FF:000035">
    <property type="entry name" value="Formate-dependent phosphoribosylglycinamide formyltransferase"/>
    <property type="match status" value="1"/>
</dbReference>
<dbReference type="FunFam" id="3.40.50.20:FF:000022">
    <property type="entry name" value="Formate-dependent phosphoribosylglycinamide formyltransferase"/>
    <property type="match status" value="1"/>
</dbReference>
<dbReference type="Gene3D" id="3.40.50.20">
    <property type="match status" value="1"/>
</dbReference>
<dbReference type="Gene3D" id="3.30.1490.20">
    <property type="entry name" value="ATP-grasp fold, A domain"/>
    <property type="match status" value="1"/>
</dbReference>
<dbReference type="Gene3D" id="3.30.470.20">
    <property type="entry name" value="ATP-grasp fold, B domain"/>
    <property type="match status" value="1"/>
</dbReference>
<dbReference type="HAMAP" id="MF_01643">
    <property type="entry name" value="PurT"/>
    <property type="match status" value="1"/>
</dbReference>
<dbReference type="InterPro" id="IPR011761">
    <property type="entry name" value="ATP-grasp"/>
</dbReference>
<dbReference type="InterPro" id="IPR003135">
    <property type="entry name" value="ATP-grasp_carboxylate-amine"/>
</dbReference>
<dbReference type="InterPro" id="IPR013815">
    <property type="entry name" value="ATP_grasp_subdomain_1"/>
</dbReference>
<dbReference type="InterPro" id="IPR016185">
    <property type="entry name" value="PreATP-grasp_dom_sf"/>
</dbReference>
<dbReference type="InterPro" id="IPR005862">
    <property type="entry name" value="PurT"/>
</dbReference>
<dbReference type="InterPro" id="IPR054350">
    <property type="entry name" value="PurT/PurK_preATP-grasp"/>
</dbReference>
<dbReference type="InterPro" id="IPR048740">
    <property type="entry name" value="PurT_C"/>
</dbReference>
<dbReference type="InterPro" id="IPR011054">
    <property type="entry name" value="Rudment_hybrid_motif"/>
</dbReference>
<dbReference type="NCBIfam" id="NF006766">
    <property type="entry name" value="PRK09288.1"/>
    <property type="match status" value="1"/>
</dbReference>
<dbReference type="NCBIfam" id="TIGR01142">
    <property type="entry name" value="purT"/>
    <property type="match status" value="1"/>
</dbReference>
<dbReference type="PANTHER" id="PTHR43055">
    <property type="entry name" value="FORMATE-DEPENDENT PHOSPHORIBOSYLGLYCINAMIDE FORMYLTRANSFERASE"/>
    <property type="match status" value="1"/>
</dbReference>
<dbReference type="PANTHER" id="PTHR43055:SF1">
    <property type="entry name" value="FORMATE-DEPENDENT PHOSPHORIBOSYLGLYCINAMIDE FORMYLTRANSFERASE"/>
    <property type="match status" value="1"/>
</dbReference>
<dbReference type="Pfam" id="PF02222">
    <property type="entry name" value="ATP-grasp"/>
    <property type="match status" value="1"/>
</dbReference>
<dbReference type="Pfam" id="PF21244">
    <property type="entry name" value="PurT_C"/>
    <property type="match status" value="1"/>
</dbReference>
<dbReference type="Pfam" id="PF22660">
    <property type="entry name" value="RS_preATP-grasp-like"/>
    <property type="match status" value="1"/>
</dbReference>
<dbReference type="SUPFAM" id="SSF56059">
    <property type="entry name" value="Glutathione synthetase ATP-binding domain-like"/>
    <property type="match status" value="1"/>
</dbReference>
<dbReference type="SUPFAM" id="SSF52440">
    <property type="entry name" value="PreATP-grasp domain"/>
    <property type="match status" value="1"/>
</dbReference>
<dbReference type="SUPFAM" id="SSF51246">
    <property type="entry name" value="Rudiment single hybrid motif"/>
    <property type="match status" value="1"/>
</dbReference>
<dbReference type="PROSITE" id="PS50975">
    <property type="entry name" value="ATP_GRASP"/>
    <property type="match status" value="1"/>
</dbReference>
<reference key="1">
    <citation type="journal article" date="2002" name="Proc. Natl. Acad. Sci. U.S.A.">
        <title>The complete genome sequence of Chlorobium tepidum TLS, a photosynthetic, anaerobic, green-sulfur bacterium.</title>
        <authorList>
            <person name="Eisen J.A."/>
            <person name="Nelson K.E."/>
            <person name="Paulsen I.T."/>
            <person name="Heidelberg J.F."/>
            <person name="Wu M."/>
            <person name="Dodson R.J."/>
            <person name="DeBoy R.T."/>
            <person name="Gwinn M.L."/>
            <person name="Nelson W.C."/>
            <person name="Haft D.H."/>
            <person name="Hickey E.K."/>
            <person name="Peterson J.D."/>
            <person name="Durkin A.S."/>
            <person name="Kolonay J.F."/>
            <person name="Yang F."/>
            <person name="Holt I.E."/>
            <person name="Umayam L.A."/>
            <person name="Mason T.M."/>
            <person name="Brenner M."/>
            <person name="Shea T.P."/>
            <person name="Parksey D.S."/>
            <person name="Nierman W.C."/>
            <person name="Feldblyum T.V."/>
            <person name="Hansen C.L."/>
            <person name="Craven M.B."/>
            <person name="Radune D."/>
            <person name="Vamathevan J.J."/>
            <person name="Khouri H.M."/>
            <person name="White O."/>
            <person name="Gruber T.M."/>
            <person name="Ketchum K.A."/>
            <person name="Venter J.C."/>
            <person name="Tettelin H."/>
            <person name="Bryant D.A."/>
            <person name="Fraser C.M."/>
        </authorList>
    </citation>
    <scope>NUCLEOTIDE SEQUENCE [LARGE SCALE GENOMIC DNA]</scope>
    <source>
        <strain>ATCC 49652 / DSM 12025 / NBRC 103806 / TLS</strain>
    </source>
</reference>